<keyword id="KW-1132">Decay of host mRNAs by virus</keyword>
<keyword id="KW-0255">Endonuclease</keyword>
<keyword id="KW-1262">Eukaryotic host gene expression shutoff by virus</keyword>
<keyword id="KW-1190">Host gene expression shutoff by virus</keyword>
<keyword id="KW-1192">Host mRNA suppression by virus</keyword>
<keyword id="KW-0945">Host-virus interaction</keyword>
<keyword id="KW-0378">Hydrolase</keyword>
<keyword id="KW-1090">Inhibition of host innate immune response by virus</keyword>
<keyword id="KW-0922">Interferon antiviral system evasion</keyword>
<keyword id="KW-0426">Late protein</keyword>
<keyword id="KW-0540">Nuclease</keyword>
<keyword id="KW-1185">Reference proteome</keyword>
<keyword id="KW-0694">RNA-binding</keyword>
<keyword id="KW-0899">Viral immunoevasion</keyword>
<keyword id="KW-0946">Virion</keyword>
<reference key="1">
    <citation type="journal article" date="1988" name="J. Gen. Virol.">
        <title>The complete DNA sequence of the long unique region in the genome of herpes simplex virus type 1.</title>
        <authorList>
            <person name="McGeoch D.J."/>
            <person name="Dalrymple M.A."/>
            <person name="Davison A.J."/>
            <person name="Dolan A."/>
            <person name="Frame M.C."/>
            <person name="McNab D."/>
            <person name="Perry L.J."/>
            <person name="Scott J.E."/>
            <person name="Taylor P."/>
        </authorList>
    </citation>
    <scope>NUCLEOTIDE SEQUENCE [GENOMIC DNA]</scope>
</reference>
<reference key="2">
    <citation type="journal article" date="1997" name="Virus Genes">
        <title>Herpes simplex virus type 1 (HSV-1) strain HSZP host shutoff gene: nucleotide sequence and comparison with HSV-1 strains differing in early shutoff of host protein synthesis.</title>
        <authorList>
            <person name="Vojvodova A."/>
            <person name="Matis J."/>
            <person name="Kudelova M."/>
            <person name="Rajcani J."/>
        </authorList>
    </citation>
    <scope>NUCLEOTIDE SEQUENCE [GENOMIC DNA]</scope>
    <source>
        <strain>HSZP</strain>
    </source>
</reference>
<reference key="3">
    <citation type="submission" date="2006-08" db="EMBL/GenBank/DDBJ databases">
        <title>Sequence analysis of a nonneuroinvasive Herpes simplex virus type 1 mutant HF10.</title>
        <authorList>
            <person name="Nishiyama Y."/>
            <person name="Ushijima Y."/>
        </authorList>
    </citation>
    <scope>NUCLEOTIDE SEQUENCE [GENOMIC DNA]</scope>
    <source>
        <strain>Nonneuroinvasive mutant HF10</strain>
    </source>
</reference>
<reference key="4">
    <citation type="journal article" date="2002" name="J. Virol.">
        <title>Cell surface major histocompatibility complex class II proteins are regulated by the products of the gamma(1)34.5 and U(L)41 genes of herpes simplex virus 1.</title>
        <authorList>
            <person name="Trgovcich J."/>
            <person name="Johnson D."/>
            <person name="Roizman B."/>
        </authorList>
    </citation>
    <scope>FUNCTION</scope>
    <source>
        <strain>F</strain>
    </source>
</reference>
<reference key="5">
    <citation type="journal article" date="2006" name="J. Virol.">
        <title>The virion host shutoff protein (UL41) of herpes simplex virus 1 is an endoribonuclease with a substrate specificity similar to that of RNase A.</title>
        <authorList>
            <person name="Taddeo B."/>
            <person name="Roizman B."/>
        </authorList>
    </citation>
    <scope>FUNCTION</scope>
</reference>
<reference key="6">
    <citation type="journal article" date="2007" name="J. Virol.">
        <title>Packaging of the virion host shutoff (Vhs) protein of herpes simplex virus: two forms of the Vhs polypeptide are associated with intranuclear B and C capsids, but only one is associated with enveloped virions.</title>
        <authorList>
            <person name="Read G.S."/>
            <person name="Patterson M."/>
        </authorList>
    </citation>
    <scope>FUNCTION</scope>
</reference>
<reference key="7">
    <citation type="journal article" date="2010" name="J. Virol.">
        <title>Evidence for translational regulation by the herpes simplex virus virion host shutoff protein.</title>
        <authorList>
            <person name="Saffran H.A."/>
            <person name="Read G.S."/>
            <person name="Smiley J.R."/>
        </authorList>
    </citation>
    <scope>FUNCTION</scope>
</reference>
<reference key="8">
    <citation type="journal article" date="2010" name="J. Virol.">
        <title>The virion host shutoff endonuclease (UL41) of herpes simplex virus interacts with the cellular cap-binding complex eIF4F.</title>
        <authorList>
            <person name="Page H.G."/>
            <person name="Read G.S."/>
        </authorList>
    </citation>
    <scope>FUNCTION</scope>
    <scope>INTERACTION WITH EIF4H AND EIF4A1</scope>
</reference>
<reference key="9">
    <citation type="journal article" date="2013" name="J. Virol.">
        <title>mRNA decay during herpes simplex virus (HSV) infections: mutations that affect translation of an mRNA influence the sites at which it is cleaved by the HSV virion host shutoff (Vhs) protein.</title>
        <authorList>
            <person name="Shiflett L.A."/>
            <person name="Read G.S."/>
        </authorList>
    </citation>
    <scope>FUNCTION</scope>
</reference>
<reference key="10">
    <citation type="journal article" date="2016" name="J. Virol.">
        <title>Herpes simplex virus 1 tegument protein UL41 counteracts IFIT3 antiviral innate immunity.</title>
        <authorList>
            <person name="Jiang Z."/>
            <person name="Su C."/>
            <person name="Zheng C."/>
        </authorList>
    </citation>
    <scope>FUNCTION</scope>
</reference>
<reference key="11">
    <citation type="journal article" date="2017" name="Antiviral Res.">
        <title>Herpes simplex virus type 1 abrogates the antiviral activity of Ch25h via its virion host shutoff protein.</title>
        <authorList>
            <person name="You H."/>
            <person name="Yuan H."/>
            <person name="Fu W."/>
            <person name="Su C."/>
            <person name="Wang W."/>
            <person name="Cheng T."/>
            <person name="Zheng C."/>
        </authorList>
    </citation>
    <scope>FUNCTION</scope>
</reference>
<reference key="12">
    <citation type="journal article" date="2017" name="J. Virol.">
        <title>Herpes simplex virus 1 abrogates the cGAS/STING-mediated Cytosolic DNA-Sensing Pathway via its virion host shutoff protein, UL41.</title>
        <authorList>
            <person name="Su C."/>
            <person name="Zheng C."/>
        </authorList>
    </citation>
    <scope>FUNCTION</scope>
</reference>
<feature type="chain" id="PRO_0000116054" description="Virion host shutoff protein">
    <location>
        <begin position="1"/>
        <end position="489"/>
    </location>
</feature>
<feature type="region of interest" description="Disordered" evidence="1">
    <location>
        <begin position="110"/>
        <end position="135"/>
    </location>
</feature>
<feature type="region of interest" description="Disordered" evidence="1">
    <location>
        <begin position="142"/>
        <end position="161"/>
    </location>
</feature>
<feature type="region of interest" description="Disordered" evidence="1">
    <location>
        <begin position="285"/>
        <end position="319"/>
    </location>
</feature>
<feature type="region of interest" description="Disordered" evidence="1">
    <location>
        <begin position="332"/>
        <end position="364"/>
    </location>
</feature>
<feature type="compositionally biased region" description="Polar residues" evidence="1">
    <location>
        <begin position="124"/>
        <end position="134"/>
    </location>
</feature>
<feature type="sequence variant" description="In strain: HSZP.">
    <original>R</original>
    <variation>H</variation>
    <location>
        <position position="18"/>
    </location>
</feature>
<feature type="sequence variant" description="In strain: HSZP.">
    <original>V</original>
    <variation>A</variation>
    <location>
        <position position="115"/>
    </location>
</feature>
<feature type="sequence variant" description="In strain: Nonneuroinvasive mutant HF10.">
    <original>E</original>
    <variation>K</variation>
    <location>
        <position position="316"/>
    </location>
</feature>
<feature type="sequence variant" description="In strain: Nonneuroinvasive mutant HF10.">
    <original>P</original>
    <variation>S</variation>
    <location>
        <position position="364"/>
    </location>
</feature>
<feature type="sequence variant" description="In strain: HSZP.">
    <original>L</original>
    <variation>R</variation>
    <location>
        <position position="374"/>
    </location>
</feature>
<feature type="sequence variant" description="In strain: HSZP.">
    <original>NPR</original>
    <variation>SRQ</variation>
    <location>
        <begin position="384"/>
        <end position="386"/>
    </location>
</feature>
<feature type="sequence variant" description="In strain: Nonneuroinvasive mutant HF10.">
    <original>P</original>
    <variation>R</variation>
    <location>
        <position position="385"/>
    </location>
</feature>
<feature type="sequence variant" description="In strain: HSZP.">
    <original>D</original>
    <variation>N</variation>
    <location>
        <position position="392"/>
    </location>
</feature>
<feature type="sequence variant" description="In strain: HSZP.">
    <original>V</original>
    <variation>M</variation>
    <location>
        <position position="452"/>
    </location>
</feature>
<evidence type="ECO:0000256" key="1">
    <source>
        <dbReference type="SAM" id="MobiDB-lite"/>
    </source>
</evidence>
<evidence type="ECO:0000269" key="2">
    <source>
    </source>
</evidence>
<evidence type="ECO:0000269" key="3">
    <source>
    </source>
</evidence>
<evidence type="ECO:0000269" key="4">
    <source>
    </source>
</evidence>
<evidence type="ECO:0000269" key="5">
    <source>
    </source>
</evidence>
<evidence type="ECO:0000269" key="6">
    <source>
    </source>
</evidence>
<evidence type="ECO:0000269" key="7">
    <source>
    </source>
</evidence>
<evidence type="ECO:0000269" key="8">
    <source>
    </source>
</evidence>
<evidence type="ECO:0000269" key="9">
    <source>
    </source>
</evidence>
<evidence type="ECO:0000269" key="10">
    <source>
    </source>
</evidence>
<evidence type="ECO:0000305" key="11"/>
<evidence type="ECO:0000305" key="12">
    <source>
    </source>
</evidence>
<organism>
    <name type="scientific">Human herpesvirus 1 (strain 17)</name>
    <name type="common">HHV-1</name>
    <name type="synonym">Human herpes simplex virus 1</name>
    <dbReference type="NCBI Taxonomy" id="10299"/>
    <lineage>
        <taxon>Viruses</taxon>
        <taxon>Duplodnaviria</taxon>
        <taxon>Heunggongvirae</taxon>
        <taxon>Peploviricota</taxon>
        <taxon>Herviviricetes</taxon>
        <taxon>Herpesvirales</taxon>
        <taxon>Orthoherpesviridae</taxon>
        <taxon>Alphaherpesvirinae</taxon>
        <taxon>Simplexvirus</taxon>
        <taxon>Simplexvirus humanalpha1</taxon>
        <taxon>Human herpesvirus 1</taxon>
    </lineage>
</organism>
<accession>P10225</accession>
<accession>Q09I92</accession>
<accession>Q82170</accession>
<protein>
    <recommendedName>
        <fullName>Virion host shutoff protein</fullName>
        <shortName>Vhs</shortName>
        <ecNumber>3.1.27.-</ecNumber>
    </recommendedName>
</protein>
<proteinExistence type="evidence at protein level"/>
<dbReference type="EC" id="3.1.27.-"/>
<dbReference type="EMBL" id="X14112">
    <property type="protein sequence ID" value="CAA32304.1"/>
    <property type="molecule type" value="Genomic_DNA"/>
</dbReference>
<dbReference type="EMBL" id="DQ889502">
    <property type="protein sequence ID" value="ABI63503.1"/>
    <property type="molecule type" value="Genomic_DNA"/>
</dbReference>
<dbReference type="EMBL" id="Z72337">
    <property type="protein sequence ID" value="CAA96524.1"/>
    <property type="molecule type" value="Genomic_DNA"/>
</dbReference>
<dbReference type="PIR" id="E30088">
    <property type="entry name" value="WMBEF1"/>
</dbReference>
<dbReference type="BioGRID" id="971408">
    <property type="interactions" value="1"/>
</dbReference>
<dbReference type="DIP" id="DIP-57855N"/>
<dbReference type="IntAct" id="P10225">
    <property type="interactions" value="8"/>
</dbReference>
<dbReference type="Proteomes" id="UP000009294">
    <property type="component" value="Segment"/>
</dbReference>
<dbReference type="GO" id="GO:0044423">
    <property type="term" value="C:virion component"/>
    <property type="evidence" value="ECO:0007669"/>
    <property type="project" value="UniProtKB-KW"/>
</dbReference>
<dbReference type="GO" id="GO:0004519">
    <property type="term" value="F:endonuclease activity"/>
    <property type="evidence" value="ECO:0007669"/>
    <property type="project" value="UniProtKB-KW"/>
</dbReference>
<dbReference type="GO" id="GO:0003723">
    <property type="term" value="F:RNA binding"/>
    <property type="evidence" value="ECO:0007669"/>
    <property type="project" value="UniProtKB-KW"/>
</dbReference>
<dbReference type="GO" id="GO:0039595">
    <property type="term" value="P:symbiont-mediated degradation of host mRNA"/>
    <property type="evidence" value="ECO:0000269"/>
    <property type="project" value="SigSci"/>
</dbReference>
<dbReference type="GO" id="GO:0019057">
    <property type="term" value="P:symbiont-mediated perturbation of host translation"/>
    <property type="evidence" value="ECO:0000269"/>
    <property type="project" value="SigSci"/>
</dbReference>
<dbReference type="GO" id="GO:0039657">
    <property type="term" value="P:symbiont-mediated suppression of host gene expression"/>
    <property type="evidence" value="ECO:0007669"/>
    <property type="project" value="UniProtKB-KW"/>
</dbReference>
<dbReference type="GO" id="GO:0052170">
    <property type="term" value="P:symbiont-mediated suppression of host innate immune response"/>
    <property type="evidence" value="ECO:0007669"/>
    <property type="project" value="UniProtKB-KW"/>
</dbReference>
<dbReference type="Gene3D" id="3.40.50.1010">
    <property type="entry name" value="5'-nuclease"/>
    <property type="match status" value="1"/>
</dbReference>
<dbReference type="InterPro" id="IPR029060">
    <property type="entry name" value="PIN-like_dom_sf"/>
</dbReference>
<dbReference type="InterPro" id="IPR006086">
    <property type="entry name" value="XPG-I_dom"/>
</dbReference>
<dbReference type="Pfam" id="PF00867">
    <property type="entry name" value="XPG_I"/>
    <property type="match status" value="1"/>
</dbReference>
<dbReference type="SUPFAM" id="SSF88723">
    <property type="entry name" value="PIN domain-like"/>
    <property type="match status" value="1"/>
</dbReference>
<gene>
    <name type="primary">UL41</name>
</gene>
<sequence length="489" mass="54918">MGLFGMMKFAHTHHLVKRRGLGAPAGYFTPIAVDLWNVMYTLVVKYQRRYPSYDREAITLHCLCRLLKVFTQKSLFPIFVTDRGVNCMEPVVFGAKAILARTTAQCRTDEEASDVDASPPPSPITDSRPSSAFSNMRRRGTSLASGTRGTAGSGAALPSAAPSKPALRLAHLFCIRVLRALGYAYINSGQLEADDACANLYHTNTVAYVYTTDTDLLLMGCDIVLDISACYIPTINCRDILKYFKMSYPQFLALFVRCHTDLHPNNTYASVEDVLRECHWTPPSRSQTRRAIRREHTSSRSTETRPPLPPAAGGTETRVSWTEILTQQIAGGYEDDEDLPLDPRDVTGGHPGPRSSSSEILTPPELVQVPNAQLLEEHRSYVANPRRHVIHDAPESLDWLPDPMTITELVEHRYIKYVISLIGPKERGPWTLLKRLPIYQDIRDENLARSIVTRHITAPDIADRFLEQLRTQAPPPAFYKDVLAKFWDE</sequence>
<comment type="function">
    <text evidence="2 3 4 5 6 7 8 9 10">Minor structural protein that acts as an endoribonuclease during lytic infection. Degrades host mRNAs in the cytoplasm by cutting them at preferred sites, including some in regions of translation initiation. Together with inhibition of host splicing by ICP27, contributes to an overall decrease in host protein synthesis. Also, after the onset of viral transcription, accelerates the turnover of viral mRNA, thereby facilitating the sequential expression of different classes of viral genes. Binds translation initiation factors eIF4H, eIF4AI, and eIF4AII, thereby may interact directly with the translation initiation complex and thus digest specifically mRNAs. Also impedes antigen presentation by major histocompatibility complex class I and class II molecules, inhibits secretion of cytokines that would otherwise recruit lymphocytes and neutrophils cells to the site of infection and blocks the activation of dendritic cells. Plays a role in the inhibition of interferon-beta activation by the cGAS/STING pathway. Mechanistically, down-regulates the expression of host cGAS/MB21D1. Also decreases the accumulation of other interferon-induced mRNAs such as host IFIT3 or CH25H to subvert their antiviral activity.</text>
</comment>
<comment type="subunit">
    <text evidence="12">Interacts with human EIF4H, EIF4A1 and EIF4A2; interaction with eIF4AI and EIF4A2 presumably allows Vhs protein to associate with the eIF4F cap-binding complex.</text>
</comment>
<comment type="interaction">
    <interactant intactId="EBI-6148417">
        <id>P10225</id>
    </interactant>
    <interactant intactId="EBI-7489933">
        <id>P06492</id>
        <label>UL48</label>
    </interactant>
    <organismsDiffer>false</organismsDiffer>
    <experiments>3</experiments>
</comment>
<comment type="subcellular location">
    <subcellularLocation>
        <location evidence="11">Virion</location>
    </subcellularLocation>
</comment>
<comment type="miscellaneous">
    <text>Strain 17 is relatively weak regarding early shutoff compared to strain KOS. Strain HSZP protein is non-functional for host protein shutoff.</text>
</comment>
<comment type="similarity">
    <text evidence="11">Belongs to the herpesviridae VHS protein family.</text>
</comment>
<name>SHUT_HHV11</name>
<organismHost>
    <name type="scientific">Homo sapiens</name>
    <name type="common">Human</name>
    <dbReference type="NCBI Taxonomy" id="9606"/>
</organismHost>